<name>RUVB_CLOBB</name>
<gene>
    <name evidence="1" type="primary">ruvB</name>
    <name type="ordered locus">CLL_A1023</name>
</gene>
<keyword id="KW-0067">ATP-binding</keyword>
<keyword id="KW-0963">Cytoplasm</keyword>
<keyword id="KW-0227">DNA damage</keyword>
<keyword id="KW-0233">DNA recombination</keyword>
<keyword id="KW-0234">DNA repair</keyword>
<keyword id="KW-0238">DNA-binding</keyword>
<keyword id="KW-0378">Hydrolase</keyword>
<keyword id="KW-0547">Nucleotide-binding</keyword>
<sequence>MERIVTPAEMFEDGNSELSLRPQKINEYIGQDKVKERLNIFIKAARNRKEALDHVLLYGPPGLGKTTLANIIAKEMTGDLKITSGPAIERAGDLAAILTTLKDYDVLFIDEIHRLNRSVEEILYPAMEDYALDIVIGKGAAAKSIRLDLPKFTLIGATTRIGMLTSPLRDRFGVLCAMEYYDETQLKEIVIRSAAVFGCKITEEGALEIASRSRGTPRIANRLLKRVRDYSEVKSNKVISLKEARDALELLEVDNQGFDKVDNKILEAIIDNFNGGPVGIETLSYFIGEELGTIEDVYEPYLLQKGFIVRTPRGRIASDKAYKHLGRVNNKNNNSNKGQTSFFK</sequence>
<evidence type="ECO:0000255" key="1">
    <source>
        <dbReference type="HAMAP-Rule" id="MF_00016"/>
    </source>
</evidence>
<proteinExistence type="inferred from homology"/>
<reference key="1">
    <citation type="submission" date="2008-04" db="EMBL/GenBank/DDBJ databases">
        <title>Complete sequence of Clostridium botulinum strain Eklund.</title>
        <authorList>
            <person name="Brinkac L.M."/>
            <person name="Brown J.L."/>
            <person name="Bruce D."/>
            <person name="Detter C."/>
            <person name="Munk C."/>
            <person name="Smith L.A."/>
            <person name="Smith T.J."/>
            <person name="Sutton G."/>
            <person name="Brettin T.S."/>
        </authorList>
    </citation>
    <scope>NUCLEOTIDE SEQUENCE [LARGE SCALE GENOMIC DNA]</scope>
    <source>
        <strain>Eklund 17B / Type B</strain>
    </source>
</reference>
<feature type="chain" id="PRO_1000089632" description="Holliday junction branch migration complex subunit RuvB">
    <location>
        <begin position="1"/>
        <end position="344"/>
    </location>
</feature>
<feature type="region of interest" description="Large ATPase domain (RuvB-L)" evidence="1">
    <location>
        <begin position="1"/>
        <end position="181"/>
    </location>
</feature>
<feature type="region of interest" description="Small ATPAse domain (RuvB-S)" evidence="1">
    <location>
        <begin position="182"/>
        <end position="252"/>
    </location>
</feature>
<feature type="region of interest" description="Head domain (RuvB-H)" evidence="1">
    <location>
        <begin position="255"/>
        <end position="344"/>
    </location>
</feature>
<feature type="binding site" evidence="1">
    <location>
        <position position="20"/>
    </location>
    <ligand>
        <name>ATP</name>
        <dbReference type="ChEBI" id="CHEBI:30616"/>
    </ligand>
</feature>
<feature type="binding site" evidence="1">
    <location>
        <position position="21"/>
    </location>
    <ligand>
        <name>ATP</name>
        <dbReference type="ChEBI" id="CHEBI:30616"/>
    </ligand>
</feature>
<feature type="binding site" evidence="1">
    <location>
        <position position="62"/>
    </location>
    <ligand>
        <name>ATP</name>
        <dbReference type="ChEBI" id="CHEBI:30616"/>
    </ligand>
</feature>
<feature type="binding site" evidence="1">
    <location>
        <position position="65"/>
    </location>
    <ligand>
        <name>ATP</name>
        <dbReference type="ChEBI" id="CHEBI:30616"/>
    </ligand>
</feature>
<feature type="binding site" evidence="1">
    <location>
        <position position="66"/>
    </location>
    <ligand>
        <name>ATP</name>
        <dbReference type="ChEBI" id="CHEBI:30616"/>
    </ligand>
</feature>
<feature type="binding site" evidence="1">
    <location>
        <position position="66"/>
    </location>
    <ligand>
        <name>Mg(2+)</name>
        <dbReference type="ChEBI" id="CHEBI:18420"/>
    </ligand>
</feature>
<feature type="binding site" evidence="1">
    <location>
        <position position="67"/>
    </location>
    <ligand>
        <name>ATP</name>
        <dbReference type="ChEBI" id="CHEBI:30616"/>
    </ligand>
</feature>
<feature type="binding site" evidence="1">
    <location>
        <begin position="128"/>
        <end position="130"/>
    </location>
    <ligand>
        <name>ATP</name>
        <dbReference type="ChEBI" id="CHEBI:30616"/>
    </ligand>
</feature>
<feature type="binding site" evidence="1">
    <location>
        <position position="171"/>
    </location>
    <ligand>
        <name>ATP</name>
        <dbReference type="ChEBI" id="CHEBI:30616"/>
    </ligand>
</feature>
<feature type="binding site" evidence="1">
    <location>
        <position position="181"/>
    </location>
    <ligand>
        <name>ATP</name>
        <dbReference type="ChEBI" id="CHEBI:30616"/>
    </ligand>
</feature>
<feature type="binding site" evidence="1">
    <location>
        <position position="218"/>
    </location>
    <ligand>
        <name>ATP</name>
        <dbReference type="ChEBI" id="CHEBI:30616"/>
    </ligand>
</feature>
<feature type="binding site" evidence="1">
    <location>
        <position position="310"/>
    </location>
    <ligand>
        <name>DNA</name>
        <dbReference type="ChEBI" id="CHEBI:16991"/>
    </ligand>
</feature>
<feature type="binding site" evidence="1">
    <location>
        <position position="315"/>
    </location>
    <ligand>
        <name>DNA</name>
        <dbReference type="ChEBI" id="CHEBI:16991"/>
    </ligand>
</feature>
<comment type="function">
    <text evidence="1">The RuvA-RuvB-RuvC complex processes Holliday junction (HJ) DNA during genetic recombination and DNA repair, while the RuvA-RuvB complex plays an important role in the rescue of blocked DNA replication forks via replication fork reversal (RFR). RuvA specifically binds to HJ cruciform DNA, conferring on it an open structure. The RuvB hexamer acts as an ATP-dependent pump, pulling dsDNA into and through the RuvAB complex. RuvB forms 2 homohexamers on either side of HJ DNA bound by 1 or 2 RuvA tetramers; 4 subunits per hexamer contact DNA at a time. Coordinated motions by a converter formed by DNA-disengaged RuvB subunits stimulates ATP hydrolysis and nucleotide exchange. Immobilization of the converter enables RuvB to convert the ATP-contained energy into a lever motion, pulling 2 nucleotides of DNA out of the RuvA tetramer per ATP hydrolyzed, thus driving DNA branch migration. The RuvB motors rotate together with the DNA substrate, which together with the progressing nucleotide cycle form the mechanistic basis for DNA recombination by continuous HJ branch migration. Branch migration allows RuvC to scan DNA until it finds its consensus sequence, where it cleaves and resolves cruciform DNA.</text>
</comment>
<comment type="catalytic activity">
    <reaction evidence="1">
        <text>ATP + H2O = ADP + phosphate + H(+)</text>
        <dbReference type="Rhea" id="RHEA:13065"/>
        <dbReference type="ChEBI" id="CHEBI:15377"/>
        <dbReference type="ChEBI" id="CHEBI:15378"/>
        <dbReference type="ChEBI" id="CHEBI:30616"/>
        <dbReference type="ChEBI" id="CHEBI:43474"/>
        <dbReference type="ChEBI" id="CHEBI:456216"/>
    </reaction>
</comment>
<comment type="subunit">
    <text evidence="1">Homohexamer. Forms an RuvA(8)-RuvB(12)-Holliday junction (HJ) complex. HJ DNA is sandwiched between 2 RuvA tetramers; dsDNA enters through RuvA and exits via RuvB. An RuvB hexamer assembles on each DNA strand where it exits the tetramer. Each RuvB hexamer is contacted by two RuvA subunits (via domain III) on 2 adjacent RuvB subunits; this complex drives branch migration. In the full resolvosome a probable DNA-RuvA(4)-RuvB(12)-RuvC(2) complex forms which resolves the HJ.</text>
</comment>
<comment type="subcellular location">
    <subcellularLocation>
        <location evidence="1">Cytoplasm</location>
    </subcellularLocation>
</comment>
<comment type="domain">
    <text evidence="1">Has 3 domains, the large (RuvB-L) and small ATPase (RuvB-S) domains and the C-terminal head (RuvB-H) domain. The head domain binds DNA, while the ATPase domains jointly bind ATP, ADP or are empty depending on the state of the subunit in the translocation cycle. During a single DNA translocation step the structure of each domain remains the same, but their relative positions change.</text>
</comment>
<comment type="similarity">
    <text evidence="1">Belongs to the RuvB family.</text>
</comment>
<dbReference type="EC" id="3.6.4.-" evidence="1"/>
<dbReference type="EMBL" id="CP001056">
    <property type="protein sequence ID" value="ACD22406.1"/>
    <property type="molecule type" value="Genomic_DNA"/>
</dbReference>
<dbReference type="SMR" id="B2TMZ2"/>
<dbReference type="KEGG" id="cbk:CLL_A1023"/>
<dbReference type="PATRIC" id="fig|935198.13.peg.972"/>
<dbReference type="HOGENOM" id="CLU_055599_1_0_9"/>
<dbReference type="Proteomes" id="UP000001195">
    <property type="component" value="Chromosome"/>
</dbReference>
<dbReference type="GO" id="GO:0005737">
    <property type="term" value="C:cytoplasm"/>
    <property type="evidence" value="ECO:0007669"/>
    <property type="project" value="UniProtKB-SubCell"/>
</dbReference>
<dbReference type="GO" id="GO:0048476">
    <property type="term" value="C:Holliday junction resolvase complex"/>
    <property type="evidence" value="ECO:0007669"/>
    <property type="project" value="UniProtKB-UniRule"/>
</dbReference>
<dbReference type="GO" id="GO:0005524">
    <property type="term" value="F:ATP binding"/>
    <property type="evidence" value="ECO:0007669"/>
    <property type="project" value="UniProtKB-UniRule"/>
</dbReference>
<dbReference type="GO" id="GO:0016887">
    <property type="term" value="F:ATP hydrolysis activity"/>
    <property type="evidence" value="ECO:0007669"/>
    <property type="project" value="InterPro"/>
</dbReference>
<dbReference type="GO" id="GO:0000400">
    <property type="term" value="F:four-way junction DNA binding"/>
    <property type="evidence" value="ECO:0007669"/>
    <property type="project" value="UniProtKB-UniRule"/>
</dbReference>
<dbReference type="GO" id="GO:0009378">
    <property type="term" value="F:four-way junction helicase activity"/>
    <property type="evidence" value="ECO:0007669"/>
    <property type="project" value="InterPro"/>
</dbReference>
<dbReference type="GO" id="GO:0006310">
    <property type="term" value="P:DNA recombination"/>
    <property type="evidence" value="ECO:0007669"/>
    <property type="project" value="UniProtKB-UniRule"/>
</dbReference>
<dbReference type="GO" id="GO:0006281">
    <property type="term" value="P:DNA repair"/>
    <property type="evidence" value="ECO:0007669"/>
    <property type="project" value="UniProtKB-UniRule"/>
</dbReference>
<dbReference type="CDD" id="cd00009">
    <property type="entry name" value="AAA"/>
    <property type="match status" value="1"/>
</dbReference>
<dbReference type="Gene3D" id="1.10.8.60">
    <property type="match status" value="1"/>
</dbReference>
<dbReference type="Gene3D" id="3.40.50.300">
    <property type="entry name" value="P-loop containing nucleotide triphosphate hydrolases"/>
    <property type="match status" value="1"/>
</dbReference>
<dbReference type="Gene3D" id="1.10.10.10">
    <property type="entry name" value="Winged helix-like DNA-binding domain superfamily/Winged helix DNA-binding domain"/>
    <property type="match status" value="1"/>
</dbReference>
<dbReference type="HAMAP" id="MF_00016">
    <property type="entry name" value="DNA_HJ_migration_RuvB"/>
    <property type="match status" value="1"/>
</dbReference>
<dbReference type="InterPro" id="IPR003593">
    <property type="entry name" value="AAA+_ATPase"/>
</dbReference>
<dbReference type="InterPro" id="IPR041445">
    <property type="entry name" value="AAA_lid_4"/>
</dbReference>
<dbReference type="InterPro" id="IPR004605">
    <property type="entry name" value="DNA_helicase_Holl-junc_RuvB"/>
</dbReference>
<dbReference type="InterPro" id="IPR027417">
    <property type="entry name" value="P-loop_NTPase"/>
</dbReference>
<dbReference type="InterPro" id="IPR008824">
    <property type="entry name" value="RuvB-like_N"/>
</dbReference>
<dbReference type="InterPro" id="IPR008823">
    <property type="entry name" value="RuvB_C"/>
</dbReference>
<dbReference type="InterPro" id="IPR036388">
    <property type="entry name" value="WH-like_DNA-bd_sf"/>
</dbReference>
<dbReference type="InterPro" id="IPR036390">
    <property type="entry name" value="WH_DNA-bd_sf"/>
</dbReference>
<dbReference type="NCBIfam" id="NF000868">
    <property type="entry name" value="PRK00080.1"/>
    <property type="match status" value="1"/>
</dbReference>
<dbReference type="NCBIfam" id="TIGR00635">
    <property type="entry name" value="ruvB"/>
    <property type="match status" value="1"/>
</dbReference>
<dbReference type="PANTHER" id="PTHR42848">
    <property type="match status" value="1"/>
</dbReference>
<dbReference type="PANTHER" id="PTHR42848:SF1">
    <property type="entry name" value="HOLLIDAY JUNCTION BRANCH MIGRATION COMPLEX SUBUNIT RUVB"/>
    <property type="match status" value="1"/>
</dbReference>
<dbReference type="Pfam" id="PF17864">
    <property type="entry name" value="AAA_lid_4"/>
    <property type="match status" value="1"/>
</dbReference>
<dbReference type="Pfam" id="PF05491">
    <property type="entry name" value="RuvB_C"/>
    <property type="match status" value="1"/>
</dbReference>
<dbReference type="Pfam" id="PF05496">
    <property type="entry name" value="RuvB_N"/>
    <property type="match status" value="1"/>
</dbReference>
<dbReference type="SMART" id="SM00382">
    <property type="entry name" value="AAA"/>
    <property type="match status" value="1"/>
</dbReference>
<dbReference type="SUPFAM" id="SSF52540">
    <property type="entry name" value="P-loop containing nucleoside triphosphate hydrolases"/>
    <property type="match status" value="1"/>
</dbReference>
<dbReference type="SUPFAM" id="SSF46785">
    <property type="entry name" value="Winged helix' DNA-binding domain"/>
    <property type="match status" value="1"/>
</dbReference>
<protein>
    <recommendedName>
        <fullName evidence="1">Holliday junction branch migration complex subunit RuvB</fullName>
        <ecNumber evidence="1">3.6.4.-</ecNumber>
    </recommendedName>
</protein>
<accession>B2TMZ2</accession>
<organism>
    <name type="scientific">Clostridium botulinum (strain Eklund 17B / Type B)</name>
    <dbReference type="NCBI Taxonomy" id="935198"/>
    <lineage>
        <taxon>Bacteria</taxon>
        <taxon>Bacillati</taxon>
        <taxon>Bacillota</taxon>
        <taxon>Clostridia</taxon>
        <taxon>Eubacteriales</taxon>
        <taxon>Clostridiaceae</taxon>
        <taxon>Clostridium</taxon>
    </lineage>
</organism>